<dbReference type="EMBL" id="AP009240">
    <property type="protein sequence ID" value="BAG78958.1"/>
    <property type="molecule type" value="Genomic_DNA"/>
</dbReference>
<dbReference type="RefSeq" id="WP_000246855.1">
    <property type="nucleotide sequence ID" value="NC_011415.1"/>
</dbReference>
<dbReference type="SMR" id="B6I1M3"/>
<dbReference type="KEGG" id="ecy:ECSE_3434"/>
<dbReference type="HOGENOM" id="CLU_115353_1_0_6"/>
<dbReference type="Proteomes" id="UP000008199">
    <property type="component" value="Chromosome"/>
</dbReference>
<dbReference type="GO" id="GO:0003676">
    <property type="term" value="F:nucleic acid binding"/>
    <property type="evidence" value="ECO:0007669"/>
    <property type="project" value="InterPro"/>
</dbReference>
<dbReference type="CDD" id="cd20736">
    <property type="entry name" value="PoNe_Nuclease"/>
    <property type="match status" value="1"/>
</dbReference>
<dbReference type="Gene3D" id="3.40.1350.10">
    <property type="match status" value="1"/>
</dbReference>
<dbReference type="HAMAP" id="MF_00048">
    <property type="entry name" value="UPF0102"/>
    <property type="match status" value="1"/>
</dbReference>
<dbReference type="InterPro" id="IPR011335">
    <property type="entry name" value="Restrct_endonuc-II-like"/>
</dbReference>
<dbReference type="InterPro" id="IPR011856">
    <property type="entry name" value="tRNA_endonuc-like_dom_sf"/>
</dbReference>
<dbReference type="InterPro" id="IPR003509">
    <property type="entry name" value="UPF0102_YraN-like"/>
</dbReference>
<dbReference type="NCBIfam" id="NF009150">
    <property type="entry name" value="PRK12497.1-3"/>
    <property type="match status" value="1"/>
</dbReference>
<dbReference type="NCBIfam" id="TIGR00252">
    <property type="entry name" value="YraN family protein"/>
    <property type="match status" value="1"/>
</dbReference>
<dbReference type="PANTHER" id="PTHR34039">
    <property type="entry name" value="UPF0102 PROTEIN YRAN"/>
    <property type="match status" value="1"/>
</dbReference>
<dbReference type="PANTHER" id="PTHR34039:SF1">
    <property type="entry name" value="UPF0102 PROTEIN YRAN"/>
    <property type="match status" value="1"/>
</dbReference>
<dbReference type="Pfam" id="PF02021">
    <property type="entry name" value="UPF0102"/>
    <property type="match status" value="1"/>
</dbReference>
<dbReference type="SUPFAM" id="SSF52980">
    <property type="entry name" value="Restriction endonuclease-like"/>
    <property type="match status" value="1"/>
</dbReference>
<sequence>MATVPTRSGSPRQLTTKQTGDAWEVQARRWLEGKGLRFVAANVNERGGEIDLIMREGRTTVFVEVRYRRSALYGGAAASVTRSKQHKLLQTARLWLARHNGSFDTVDCRFDVVAFTGNEVEWIKDAFNDHS</sequence>
<evidence type="ECO:0000255" key="1">
    <source>
        <dbReference type="HAMAP-Rule" id="MF_00048"/>
    </source>
</evidence>
<evidence type="ECO:0000256" key="2">
    <source>
        <dbReference type="SAM" id="MobiDB-lite"/>
    </source>
</evidence>
<name>YRAN_ECOSE</name>
<organism>
    <name type="scientific">Escherichia coli (strain SE11)</name>
    <dbReference type="NCBI Taxonomy" id="409438"/>
    <lineage>
        <taxon>Bacteria</taxon>
        <taxon>Pseudomonadati</taxon>
        <taxon>Pseudomonadota</taxon>
        <taxon>Gammaproteobacteria</taxon>
        <taxon>Enterobacterales</taxon>
        <taxon>Enterobacteriaceae</taxon>
        <taxon>Escherichia</taxon>
    </lineage>
</organism>
<comment type="similarity">
    <text evidence="1">Belongs to the UPF0102 family.</text>
</comment>
<reference key="1">
    <citation type="journal article" date="2008" name="DNA Res.">
        <title>Complete genome sequence and comparative analysis of the wild-type commensal Escherichia coli strain SE11 isolated from a healthy adult.</title>
        <authorList>
            <person name="Oshima K."/>
            <person name="Toh H."/>
            <person name="Ogura Y."/>
            <person name="Sasamoto H."/>
            <person name="Morita H."/>
            <person name="Park S.-H."/>
            <person name="Ooka T."/>
            <person name="Iyoda S."/>
            <person name="Taylor T.D."/>
            <person name="Hayashi T."/>
            <person name="Itoh K."/>
            <person name="Hattori M."/>
        </authorList>
    </citation>
    <scope>NUCLEOTIDE SEQUENCE [LARGE SCALE GENOMIC DNA]</scope>
    <source>
        <strain>SE11</strain>
    </source>
</reference>
<accession>B6I1M3</accession>
<proteinExistence type="inferred from homology"/>
<gene>
    <name evidence="1" type="primary">yraN</name>
    <name type="ordered locus">ECSE_3434</name>
</gene>
<feature type="chain" id="PRO_1000091239" description="UPF0102 protein YraN">
    <location>
        <begin position="1"/>
        <end position="131"/>
    </location>
</feature>
<feature type="region of interest" description="Disordered" evidence="2">
    <location>
        <begin position="1"/>
        <end position="20"/>
    </location>
</feature>
<feature type="compositionally biased region" description="Polar residues" evidence="2">
    <location>
        <begin position="1"/>
        <end position="19"/>
    </location>
</feature>
<protein>
    <recommendedName>
        <fullName evidence="1">UPF0102 protein YraN</fullName>
    </recommendedName>
</protein>